<sequence length="152" mass="16904">METPKLSVEAIEKGTVIDHIPAGRGLTILRQFKLLHYGNAVTVGFNLPSKTQGSKDIIKIKGVCLDDKAADRLALFAPEAVVNTIDNFKVVQKRHLNLPDEIAEVFRCPNTNCAGHGEPVKSRFYVKKHNGQTRLKCHYCEKTYSRDSVAEA</sequence>
<feature type="chain" id="PRO_0000142308" description="Aspartate carbamoyltransferase regulatory chain">
    <location>
        <begin position="1"/>
        <end position="152"/>
    </location>
</feature>
<feature type="binding site" evidence="1">
    <location>
        <position position="108"/>
    </location>
    <ligand>
        <name>Zn(2+)</name>
        <dbReference type="ChEBI" id="CHEBI:29105"/>
    </ligand>
</feature>
<feature type="binding site" evidence="1">
    <location>
        <position position="113"/>
    </location>
    <ligand>
        <name>Zn(2+)</name>
        <dbReference type="ChEBI" id="CHEBI:29105"/>
    </ligand>
</feature>
<feature type="binding site" evidence="1">
    <location>
        <position position="137"/>
    </location>
    <ligand>
        <name>Zn(2+)</name>
        <dbReference type="ChEBI" id="CHEBI:29105"/>
    </ligand>
</feature>
<feature type="binding site" evidence="1">
    <location>
        <position position="140"/>
    </location>
    <ligand>
        <name>Zn(2+)</name>
        <dbReference type="ChEBI" id="CHEBI:29105"/>
    </ligand>
</feature>
<keyword id="KW-0479">Metal-binding</keyword>
<keyword id="KW-0665">Pyrimidine biosynthesis</keyword>
<keyword id="KW-1185">Reference proteome</keyword>
<keyword id="KW-0862">Zinc</keyword>
<evidence type="ECO:0000255" key="1">
    <source>
        <dbReference type="HAMAP-Rule" id="MF_00002"/>
    </source>
</evidence>
<accession>Q9K1K9</accession>
<comment type="function">
    <text evidence="1">Involved in allosteric regulation of aspartate carbamoyltransferase.</text>
</comment>
<comment type="cofactor">
    <cofactor evidence="1">
        <name>Zn(2+)</name>
        <dbReference type="ChEBI" id="CHEBI:29105"/>
    </cofactor>
    <text evidence="1">Binds 1 zinc ion per subunit.</text>
</comment>
<comment type="subunit">
    <text evidence="1">Contains catalytic and regulatory chains.</text>
</comment>
<comment type="similarity">
    <text evidence="1">Belongs to the PyrI family.</text>
</comment>
<protein>
    <recommendedName>
        <fullName evidence="1">Aspartate carbamoyltransferase regulatory chain</fullName>
    </recommendedName>
</protein>
<organism>
    <name type="scientific">Neisseria meningitidis serogroup B (strain ATCC BAA-335 / MC58)</name>
    <dbReference type="NCBI Taxonomy" id="122586"/>
    <lineage>
        <taxon>Bacteria</taxon>
        <taxon>Pseudomonadati</taxon>
        <taxon>Pseudomonadota</taxon>
        <taxon>Betaproteobacteria</taxon>
        <taxon>Neisseriales</taxon>
        <taxon>Neisseriaceae</taxon>
        <taxon>Neisseria</taxon>
    </lineage>
</organism>
<reference key="1">
    <citation type="journal article" date="2000" name="Science">
        <title>Complete genome sequence of Neisseria meningitidis serogroup B strain MC58.</title>
        <authorList>
            <person name="Tettelin H."/>
            <person name="Saunders N.J."/>
            <person name="Heidelberg J.F."/>
            <person name="Jeffries A.C."/>
            <person name="Nelson K.E."/>
            <person name="Eisen J.A."/>
            <person name="Ketchum K.A."/>
            <person name="Hood D.W."/>
            <person name="Peden J.F."/>
            <person name="Dodson R.J."/>
            <person name="Nelson W.C."/>
            <person name="Gwinn M.L."/>
            <person name="DeBoy R.T."/>
            <person name="Peterson J.D."/>
            <person name="Hickey E.K."/>
            <person name="Haft D.H."/>
            <person name="Salzberg S.L."/>
            <person name="White O."/>
            <person name="Fleischmann R.D."/>
            <person name="Dougherty B.A."/>
            <person name="Mason T.M."/>
            <person name="Ciecko A."/>
            <person name="Parksey D.S."/>
            <person name="Blair E."/>
            <person name="Cittone H."/>
            <person name="Clark E.B."/>
            <person name="Cotton M.D."/>
            <person name="Utterback T.R."/>
            <person name="Khouri H.M."/>
            <person name="Qin H."/>
            <person name="Vamathevan J.J."/>
            <person name="Gill J."/>
            <person name="Scarlato V."/>
            <person name="Masignani V."/>
            <person name="Pizza M."/>
            <person name="Grandi G."/>
            <person name="Sun L."/>
            <person name="Smith H.O."/>
            <person name="Fraser C.M."/>
            <person name="Moxon E.R."/>
            <person name="Rappuoli R."/>
            <person name="Venter J.C."/>
        </authorList>
    </citation>
    <scope>NUCLEOTIDE SEQUENCE [LARGE SCALE GENOMIC DNA]</scope>
    <source>
        <strain>ATCC BAA-335 / MC58</strain>
    </source>
</reference>
<name>PYRI_NEIMB</name>
<proteinExistence type="inferred from homology"/>
<dbReference type="EMBL" id="AE002098">
    <property type="protein sequence ID" value="AAF40566.1"/>
    <property type="molecule type" value="Genomic_DNA"/>
</dbReference>
<dbReference type="PIR" id="B81238">
    <property type="entry name" value="B81238"/>
</dbReference>
<dbReference type="RefSeq" id="NP_273165.1">
    <property type="nucleotide sequence ID" value="NC_003112.2"/>
</dbReference>
<dbReference type="RefSeq" id="WP_002216215.1">
    <property type="nucleotide sequence ID" value="NC_003112.2"/>
</dbReference>
<dbReference type="SMR" id="Q9K1K9"/>
<dbReference type="FunCoup" id="Q9K1K9">
    <property type="interactions" value="119"/>
</dbReference>
<dbReference type="STRING" id="122586.NMB0107"/>
<dbReference type="PaxDb" id="122586-NMB0107"/>
<dbReference type="GeneID" id="86930316"/>
<dbReference type="KEGG" id="nme:NMB0107"/>
<dbReference type="PATRIC" id="fig|122586.8.peg.147"/>
<dbReference type="HOGENOM" id="CLU_128576_0_0_4"/>
<dbReference type="InParanoid" id="Q9K1K9"/>
<dbReference type="OrthoDB" id="5599321at2"/>
<dbReference type="Proteomes" id="UP000000425">
    <property type="component" value="Chromosome"/>
</dbReference>
<dbReference type="GO" id="GO:0009347">
    <property type="term" value="C:aspartate carbamoyltransferase complex"/>
    <property type="evidence" value="ECO:0000318"/>
    <property type="project" value="GO_Central"/>
</dbReference>
<dbReference type="GO" id="GO:0046872">
    <property type="term" value="F:metal ion binding"/>
    <property type="evidence" value="ECO:0007669"/>
    <property type="project" value="UniProtKB-KW"/>
</dbReference>
<dbReference type="GO" id="GO:0006207">
    <property type="term" value="P:'de novo' pyrimidine nucleobase biosynthetic process"/>
    <property type="evidence" value="ECO:0000318"/>
    <property type="project" value="GO_Central"/>
</dbReference>
<dbReference type="GO" id="GO:0006221">
    <property type="term" value="P:pyrimidine nucleotide biosynthetic process"/>
    <property type="evidence" value="ECO:0007669"/>
    <property type="project" value="UniProtKB-UniRule"/>
</dbReference>
<dbReference type="Gene3D" id="2.30.30.20">
    <property type="entry name" value="Aspartate carbamoyltransferase regulatory subunit, C-terminal domain"/>
    <property type="match status" value="1"/>
</dbReference>
<dbReference type="Gene3D" id="3.30.70.140">
    <property type="entry name" value="Aspartate carbamoyltransferase regulatory subunit, N-terminal domain"/>
    <property type="match status" value="1"/>
</dbReference>
<dbReference type="HAMAP" id="MF_00002">
    <property type="entry name" value="Asp_carb_tr_reg"/>
    <property type="match status" value="1"/>
</dbReference>
<dbReference type="InterPro" id="IPR020545">
    <property type="entry name" value="Asp_carbamoyltransf_reg_N"/>
</dbReference>
<dbReference type="InterPro" id="IPR002801">
    <property type="entry name" value="Asp_carbamoylTrfase_reg"/>
</dbReference>
<dbReference type="InterPro" id="IPR020542">
    <property type="entry name" value="Asp_carbamoyltrfase_reg_C"/>
</dbReference>
<dbReference type="InterPro" id="IPR036792">
    <property type="entry name" value="Asp_carbatrfase_reg_C_sf"/>
</dbReference>
<dbReference type="InterPro" id="IPR036793">
    <property type="entry name" value="Asp_carbatrfase_reg_N_sf"/>
</dbReference>
<dbReference type="NCBIfam" id="TIGR00240">
    <property type="entry name" value="ATCase_reg"/>
    <property type="match status" value="1"/>
</dbReference>
<dbReference type="PANTHER" id="PTHR35805">
    <property type="entry name" value="ASPARTATE CARBAMOYLTRANSFERASE REGULATORY CHAIN"/>
    <property type="match status" value="1"/>
</dbReference>
<dbReference type="PANTHER" id="PTHR35805:SF1">
    <property type="entry name" value="ASPARTATE CARBAMOYLTRANSFERASE REGULATORY CHAIN"/>
    <property type="match status" value="1"/>
</dbReference>
<dbReference type="Pfam" id="PF01948">
    <property type="entry name" value="PyrI"/>
    <property type="match status" value="1"/>
</dbReference>
<dbReference type="Pfam" id="PF02748">
    <property type="entry name" value="PyrI_C"/>
    <property type="match status" value="1"/>
</dbReference>
<dbReference type="SUPFAM" id="SSF57825">
    <property type="entry name" value="Aspartate carbamoyltransferase, Regulatory-chain, C-terminal domain"/>
    <property type="match status" value="1"/>
</dbReference>
<dbReference type="SUPFAM" id="SSF54893">
    <property type="entry name" value="Aspartate carbamoyltransferase, Regulatory-chain, N-terminal domain"/>
    <property type="match status" value="1"/>
</dbReference>
<gene>
    <name evidence="1" type="primary">pyrI</name>
    <name type="ordered locus">NMB0107</name>
</gene>